<dbReference type="EMBL" id="CP000053">
    <property type="protein sequence ID" value="AAY61215.1"/>
    <property type="molecule type" value="Genomic_DNA"/>
</dbReference>
<dbReference type="SMR" id="Q4UMJ3"/>
<dbReference type="STRING" id="315456.RF_0364"/>
<dbReference type="KEGG" id="rfe:RF_0364"/>
<dbReference type="eggNOG" id="COG0593">
    <property type="taxonomic scope" value="Bacteria"/>
</dbReference>
<dbReference type="HOGENOM" id="CLU_026910_3_0_5"/>
<dbReference type="OrthoDB" id="9807019at2"/>
<dbReference type="Proteomes" id="UP000008548">
    <property type="component" value="Chromosome"/>
</dbReference>
<dbReference type="GO" id="GO:0005737">
    <property type="term" value="C:cytoplasm"/>
    <property type="evidence" value="ECO:0007669"/>
    <property type="project" value="UniProtKB-SubCell"/>
</dbReference>
<dbReference type="GO" id="GO:0005886">
    <property type="term" value="C:plasma membrane"/>
    <property type="evidence" value="ECO:0007669"/>
    <property type="project" value="TreeGrafter"/>
</dbReference>
<dbReference type="GO" id="GO:0005524">
    <property type="term" value="F:ATP binding"/>
    <property type="evidence" value="ECO:0007669"/>
    <property type="project" value="UniProtKB-UniRule"/>
</dbReference>
<dbReference type="GO" id="GO:0016887">
    <property type="term" value="F:ATP hydrolysis activity"/>
    <property type="evidence" value="ECO:0007669"/>
    <property type="project" value="InterPro"/>
</dbReference>
<dbReference type="GO" id="GO:0003688">
    <property type="term" value="F:DNA replication origin binding"/>
    <property type="evidence" value="ECO:0007669"/>
    <property type="project" value="UniProtKB-UniRule"/>
</dbReference>
<dbReference type="GO" id="GO:0008289">
    <property type="term" value="F:lipid binding"/>
    <property type="evidence" value="ECO:0007669"/>
    <property type="project" value="UniProtKB-KW"/>
</dbReference>
<dbReference type="GO" id="GO:0006270">
    <property type="term" value="P:DNA replication initiation"/>
    <property type="evidence" value="ECO:0007669"/>
    <property type="project" value="UniProtKB-UniRule"/>
</dbReference>
<dbReference type="GO" id="GO:0006275">
    <property type="term" value="P:regulation of DNA replication"/>
    <property type="evidence" value="ECO:0007669"/>
    <property type="project" value="UniProtKB-UniRule"/>
</dbReference>
<dbReference type="CDD" id="cd00009">
    <property type="entry name" value="AAA"/>
    <property type="match status" value="1"/>
</dbReference>
<dbReference type="CDD" id="cd06571">
    <property type="entry name" value="Bac_DnaA_C"/>
    <property type="match status" value="1"/>
</dbReference>
<dbReference type="FunFam" id="3.40.50.300:FF:000668">
    <property type="entry name" value="Chromosomal replication initiator protein DnaA"/>
    <property type="match status" value="1"/>
</dbReference>
<dbReference type="Gene3D" id="1.10.1750.10">
    <property type="match status" value="1"/>
</dbReference>
<dbReference type="Gene3D" id="1.10.8.60">
    <property type="match status" value="1"/>
</dbReference>
<dbReference type="Gene3D" id="3.30.300.180">
    <property type="match status" value="1"/>
</dbReference>
<dbReference type="Gene3D" id="3.40.50.300">
    <property type="entry name" value="P-loop containing nucleotide triphosphate hydrolases"/>
    <property type="match status" value="1"/>
</dbReference>
<dbReference type="HAMAP" id="MF_00377">
    <property type="entry name" value="DnaA_bact"/>
    <property type="match status" value="1"/>
</dbReference>
<dbReference type="InterPro" id="IPR003593">
    <property type="entry name" value="AAA+_ATPase"/>
</dbReference>
<dbReference type="InterPro" id="IPR001957">
    <property type="entry name" value="Chromosome_initiator_DnaA"/>
</dbReference>
<dbReference type="InterPro" id="IPR020591">
    <property type="entry name" value="Chromosome_initiator_DnaA-like"/>
</dbReference>
<dbReference type="InterPro" id="IPR018312">
    <property type="entry name" value="Chromosome_initiator_DnaA_CS"/>
</dbReference>
<dbReference type="InterPro" id="IPR013159">
    <property type="entry name" value="DnaA_C"/>
</dbReference>
<dbReference type="InterPro" id="IPR013317">
    <property type="entry name" value="DnaA_dom"/>
</dbReference>
<dbReference type="InterPro" id="IPR024633">
    <property type="entry name" value="DnaA_N_dom"/>
</dbReference>
<dbReference type="InterPro" id="IPR038454">
    <property type="entry name" value="DnaA_N_sf"/>
</dbReference>
<dbReference type="InterPro" id="IPR027417">
    <property type="entry name" value="P-loop_NTPase"/>
</dbReference>
<dbReference type="InterPro" id="IPR010921">
    <property type="entry name" value="Trp_repressor/repl_initiator"/>
</dbReference>
<dbReference type="NCBIfam" id="TIGR00362">
    <property type="entry name" value="DnaA"/>
    <property type="match status" value="1"/>
</dbReference>
<dbReference type="PANTHER" id="PTHR30050">
    <property type="entry name" value="CHROMOSOMAL REPLICATION INITIATOR PROTEIN DNAA"/>
    <property type="match status" value="1"/>
</dbReference>
<dbReference type="PANTHER" id="PTHR30050:SF2">
    <property type="entry name" value="CHROMOSOMAL REPLICATION INITIATOR PROTEIN DNAA"/>
    <property type="match status" value="1"/>
</dbReference>
<dbReference type="Pfam" id="PF00308">
    <property type="entry name" value="Bac_DnaA"/>
    <property type="match status" value="1"/>
</dbReference>
<dbReference type="Pfam" id="PF08299">
    <property type="entry name" value="Bac_DnaA_C"/>
    <property type="match status" value="1"/>
</dbReference>
<dbReference type="Pfam" id="PF11638">
    <property type="entry name" value="DnaA_N"/>
    <property type="match status" value="1"/>
</dbReference>
<dbReference type="PRINTS" id="PR00051">
    <property type="entry name" value="DNAA"/>
</dbReference>
<dbReference type="SMART" id="SM00382">
    <property type="entry name" value="AAA"/>
    <property type="match status" value="1"/>
</dbReference>
<dbReference type="SMART" id="SM00760">
    <property type="entry name" value="Bac_DnaA_C"/>
    <property type="match status" value="1"/>
</dbReference>
<dbReference type="SUPFAM" id="SSF52540">
    <property type="entry name" value="P-loop containing nucleoside triphosphate hydrolases"/>
    <property type="match status" value="1"/>
</dbReference>
<dbReference type="SUPFAM" id="SSF48295">
    <property type="entry name" value="TrpR-like"/>
    <property type="match status" value="1"/>
</dbReference>
<dbReference type="PROSITE" id="PS01008">
    <property type="entry name" value="DNAA"/>
    <property type="match status" value="1"/>
</dbReference>
<organism>
    <name type="scientific">Rickettsia felis (strain ATCC VR-1525 / URRWXCal2)</name>
    <name type="common">Rickettsia azadi</name>
    <dbReference type="NCBI Taxonomy" id="315456"/>
    <lineage>
        <taxon>Bacteria</taxon>
        <taxon>Pseudomonadati</taxon>
        <taxon>Pseudomonadota</taxon>
        <taxon>Alphaproteobacteria</taxon>
        <taxon>Rickettsiales</taxon>
        <taxon>Rickettsiaceae</taxon>
        <taxon>Rickettsieae</taxon>
        <taxon>Rickettsia</taxon>
        <taxon>spotted fever group</taxon>
    </lineage>
</organism>
<comment type="function">
    <text evidence="1">Plays an essential role in the initiation and regulation of chromosomal replication. ATP-DnaA binds to the origin of replication (oriC) to initiate formation of the DNA replication initiation complex once per cell cycle. Binds the DnaA box (a 9 base pair repeat at the origin) and separates the double-stranded (ds)DNA. Forms a right-handed helical filament on oriC DNA; dsDNA binds to the exterior of the filament while single-stranded (ss)DNA is stabiized in the filament's interior. The ATP-DnaA-oriC complex binds and stabilizes one strand of the AT-rich DNA unwinding element (DUE), permitting loading of DNA polymerase. After initiation quickly degrades to an ADP-DnaA complex that is not apt for DNA replication. Binds acidic phospholipids.</text>
</comment>
<comment type="subunit">
    <text evidence="1">Oligomerizes as a right-handed, spiral filament on DNA at oriC.</text>
</comment>
<comment type="subcellular location">
    <subcellularLocation>
        <location evidence="1">Cytoplasm</location>
    </subcellularLocation>
</comment>
<comment type="domain">
    <text evidence="1">Domain I is involved in oligomerization and binding regulators, domain II is flexibile and of varying length in different bacteria, domain III forms the AAA+ region, while domain IV binds dsDNA.</text>
</comment>
<comment type="similarity">
    <text evidence="1">Belongs to the DnaA family.</text>
</comment>
<sequence length="463" mass="52932">MSTNQIILTDQGDNYVNVWSHVAQDLYNHYGETLYNSWFSKVNFIESSLNTVILCAPTNFVRDWIKSKYSMVILQLFQHYNNTIKSIEIITKELPGTTQTVIELPTKTFADIGSSELNSENIFSTLDVRFTFDNFVVGAPNELAYAAARAVAESSGAVSESNPLFLYGGVGLGKTHLMHAIGWYIKQNNPSRKVIYMSAEKFMYQFVKALRNKEVISFKEKFRSVDVLMIDDIQFICGKDSTQEEFFHTFNTLIDNNRQMVISCDRSPSDLDNIEDRIKSRLGWGLVADVHSTTYELRLGILESKIEQMNVKIPKDVIDFLASKIVSNVRELEGALNKVIAHSNFTLKEITLENTQNILRDLLRSNERIITVEDIQKKVASRYNIKLSDMSSSRRLREVARPRQIAMYLSKALTPKSLADIGKKFGKKDHTTVMHAIKKVEELLENDIELREEINLLMKILQN</sequence>
<proteinExistence type="inferred from homology"/>
<accession>Q4UMJ3</accession>
<gene>
    <name evidence="1" type="primary">dnaA</name>
    <name type="ordered locus">RF_0364</name>
</gene>
<evidence type="ECO:0000255" key="1">
    <source>
        <dbReference type="HAMAP-Rule" id="MF_00377"/>
    </source>
</evidence>
<keyword id="KW-0067">ATP-binding</keyword>
<keyword id="KW-0963">Cytoplasm</keyword>
<keyword id="KW-0235">DNA replication</keyword>
<keyword id="KW-0238">DNA-binding</keyword>
<keyword id="KW-0446">Lipid-binding</keyword>
<keyword id="KW-0547">Nucleotide-binding</keyword>
<feature type="chain" id="PRO_0000277961" description="Chromosomal replication initiator protein DnaA">
    <location>
        <begin position="1"/>
        <end position="463"/>
    </location>
</feature>
<feature type="region of interest" description="Domain I, interacts with DnaA modulators" evidence="1">
    <location>
        <begin position="1"/>
        <end position="83"/>
    </location>
</feature>
<feature type="region of interest" description="Domain II" evidence="1">
    <location>
        <begin position="83"/>
        <end position="124"/>
    </location>
</feature>
<feature type="region of interest" description="Domain III, AAA+ region" evidence="1">
    <location>
        <begin position="125"/>
        <end position="343"/>
    </location>
</feature>
<feature type="region of interest" description="Domain IV, binds dsDNA" evidence="1">
    <location>
        <begin position="344"/>
        <end position="463"/>
    </location>
</feature>
<feature type="binding site" evidence="1">
    <location>
        <position position="171"/>
    </location>
    <ligand>
        <name>ATP</name>
        <dbReference type="ChEBI" id="CHEBI:30616"/>
    </ligand>
</feature>
<feature type="binding site" evidence="1">
    <location>
        <position position="173"/>
    </location>
    <ligand>
        <name>ATP</name>
        <dbReference type="ChEBI" id="CHEBI:30616"/>
    </ligand>
</feature>
<feature type="binding site" evidence="1">
    <location>
        <position position="174"/>
    </location>
    <ligand>
        <name>ATP</name>
        <dbReference type="ChEBI" id="CHEBI:30616"/>
    </ligand>
</feature>
<feature type="binding site" evidence="1">
    <location>
        <position position="175"/>
    </location>
    <ligand>
        <name>ATP</name>
        <dbReference type="ChEBI" id="CHEBI:30616"/>
    </ligand>
</feature>
<protein>
    <recommendedName>
        <fullName evidence="1">Chromosomal replication initiator protein DnaA</fullName>
    </recommendedName>
</protein>
<name>DNAA_RICFE</name>
<reference key="1">
    <citation type="journal article" date="2005" name="PLoS Biol.">
        <title>The genome sequence of Rickettsia felis identifies the first putative conjugative plasmid in an obligate intracellular parasite.</title>
        <authorList>
            <person name="Ogata H."/>
            <person name="Renesto P."/>
            <person name="Audic S."/>
            <person name="Robert C."/>
            <person name="Blanc G."/>
            <person name="Fournier P.-E."/>
            <person name="Parinello H."/>
            <person name="Claverie J.-M."/>
            <person name="Raoult D."/>
        </authorList>
    </citation>
    <scope>NUCLEOTIDE SEQUENCE [LARGE SCALE GENOMIC DNA]</scope>
    <source>
        <strain>ATCC VR-1525 / URRWXCal2</strain>
    </source>
</reference>